<name>TEG7_PSHV1</name>
<reference key="1">
    <citation type="journal article" date="2006" name="J. Virol.">
        <title>Psittacid herpesvirus 1 and infectious laryngotracheitis virus: Comparative genome sequence analysis of two avian alphaherpesviruses.</title>
        <authorList>
            <person name="Thureen D.R."/>
            <person name="Keeler C.L. Jr."/>
        </authorList>
    </citation>
    <scope>NUCLEOTIDE SEQUENCE [LARGE SCALE GENOMIC DNA]</scope>
</reference>
<keyword id="KW-1035">Host cytoplasm</keyword>
<keyword id="KW-1040">Host Golgi apparatus</keyword>
<keyword id="KW-0597">Phosphoprotein</keyword>
<keyword id="KW-1185">Reference proteome</keyword>
<keyword id="KW-0946">Virion</keyword>
<keyword id="KW-0920">Virion tegument</keyword>
<proteinExistence type="inferred from homology"/>
<gene>
    <name type="primary">UL51</name>
</gene>
<accession>Q6UDM1</accession>
<comment type="function">
    <text evidence="1">Plays several roles during the time course of infection, including egress of virus particles from the perinuclear space and secondary envelopment of cytoplasmic capsids that bud into specific trans-Golgi network (TGN)-derived membranes.</text>
</comment>
<comment type="subunit">
    <text evidence="1 2">Oligomerizes. Interacts with UL7; this interaction mediates UL7 incorporation to virions.</text>
</comment>
<comment type="subcellular location">
    <subcellularLocation>
        <location evidence="1">Virion tegument</location>
    </subcellularLocation>
    <subcellularLocation>
        <location evidence="1">Host cytoplasm</location>
    </subcellularLocation>
    <subcellularLocation>
        <location evidence="1">Host Golgi apparatus</location>
    </subcellularLocation>
</comment>
<comment type="PTM">
    <text evidence="1">Phosphorylated.</text>
</comment>
<comment type="similarity">
    <text evidence="4">Belongs to the herpesviridae UL51 family.</text>
</comment>
<evidence type="ECO:0000250" key="1">
    <source>
        <dbReference type="UniProtKB" id="P10235"/>
    </source>
</evidence>
<evidence type="ECO:0000250" key="2">
    <source>
        <dbReference type="UniProtKB" id="P16823"/>
    </source>
</evidence>
<evidence type="ECO:0000256" key="3">
    <source>
        <dbReference type="SAM" id="MobiDB-lite"/>
    </source>
</evidence>
<evidence type="ECO:0000305" key="4"/>
<dbReference type="EMBL" id="AY372243">
    <property type="protein sequence ID" value="AAQ73689.1"/>
    <property type="molecule type" value="Genomic_DNA"/>
</dbReference>
<dbReference type="RefSeq" id="NP_944383.1">
    <property type="nucleotide sequence ID" value="NC_005264.1"/>
</dbReference>
<dbReference type="GeneID" id="2657003"/>
<dbReference type="KEGG" id="vg:2657003"/>
<dbReference type="Proteomes" id="UP000006840">
    <property type="component" value="Segment"/>
</dbReference>
<dbReference type="GO" id="GO:0044177">
    <property type="term" value="C:host cell Golgi apparatus"/>
    <property type="evidence" value="ECO:0007669"/>
    <property type="project" value="UniProtKB-SubCell"/>
</dbReference>
<dbReference type="GO" id="GO:0019033">
    <property type="term" value="C:viral tegument"/>
    <property type="evidence" value="ECO:0007669"/>
    <property type="project" value="UniProtKB-SubCell"/>
</dbReference>
<dbReference type="InterPro" id="IPR007625">
    <property type="entry name" value="Herpes_UL51"/>
</dbReference>
<dbReference type="Pfam" id="PF04540">
    <property type="entry name" value="Herpes_UL51"/>
    <property type="match status" value="1"/>
</dbReference>
<feature type="chain" id="PRO_0000406826" description="Tegument protein UL51">
    <location>
        <begin position="1"/>
        <end position="260"/>
    </location>
</feature>
<feature type="region of interest" description="Disordered" evidence="3">
    <location>
        <begin position="208"/>
        <end position="260"/>
    </location>
</feature>
<feature type="compositionally biased region" description="Basic and acidic residues" evidence="3">
    <location>
        <begin position="220"/>
        <end position="236"/>
    </location>
</feature>
<feature type="compositionally biased region" description="Polar residues" evidence="3">
    <location>
        <begin position="237"/>
        <end position="246"/>
    </location>
</feature>
<organism>
    <name type="scientific">Psittacid herpesvirus 1 (isolate Amazon parrot/-/97-0001/1997)</name>
    <name type="common">PsHV-1</name>
    <name type="synonym">Pacheco's disease virus</name>
    <dbReference type="NCBI Taxonomy" id="670426"/>
    <lineage>
        <taxon>Viruses</taxon>
        <taxon>Duplodnaviria</taxon>
        <taxon>Heunggongvirae</taxon>
        <taxon>Peploviricota</taxon>
        <taxon>Herviviricetes</taxon>
        <taxon>Herpesvirales</taxon>
        <taxon>Orthoherpesviridae</taxon>
        <taxon>Alphaherpesvirinae</taxon>
        <taxon>Iltovirus</taxon>
        <taxon>Iltovirus psittacidalpha1</taxon>
        <taxon>Psittacid alphaherpesvirus 1</taxon>
    </lineage>
</organism>
<organismHost>
    <name type="scientific">Amazona oratrix</name>
    <name type="common">yellow-headed parrot</name>
    <dbReference type="NCBI Taxonomy" id="152276"/>
</organismHost>
<sequence>MRNPNIFLALYVTGSWIWRQRMPMAQCLKSCVCSDYEPLVKDAVQLPVVDEGRVTAAVNVVKLFLPDCLSVDDVLKSRDELKKLAQARNISKILAKSATAIHIARGIKCPKGTENVLRQTLVDNCTVFKSMYSVLAYLYLSPGADTDGMIDQVVAQTADRTIMLGDMTVLSHAMRVDGVDIPHSSQDLAKMGLSAADSDTLDPIQLVGVMEPPSPPPHTADAREDAPHVSPPERRPQSSATLTSLDAKSRRGLAGQVPAS</sequence>
<protein>
    <recommendedName>
        <fullName>Tegument protein UL51</fullName>
    </recommendedName>
</protein>